<reference key="1">
    <citation type="journal article" date="2005" name="Proc. Natl. Acad. Sci. U.S.A.">
        <title>Genome analysis of multiple pathogenic isolates of Streptococcus agalactiae: implications for the microbial 'pan-genome'.</title>
        <authorList>
            <person name="Tettelin H."/>
            <person name="Masignani V."/>
            <person name="Cieslewicz M.J."/>
            <person name="Donati C."/>
            <person name="Medini D."/>
            <person name="Ward N.L."/>
            <person name="Angiuoli S.V."/>
            <person name="Crabtree J."/>
            <person name="Jones A.L."/>
            <person name="Durkin A.S."/>
            <person name="DeBoy R.T."/>
            <person name="Davidsen T.M."/>
            <person name="Mora M."/>
            <person name="Scarselli M."/>
            <person name="Margarit y Ros I."/>
            <person name="Peterson J.D."/>
            <person name="Hauser C.R."/>
            <person name="Sundaram J.P."/>
            <person name="Nelson W.C."/>
            <person name="Madupu R."/>
            <person name="Brinkac L.M."/>
            <person name="Dodson R.J."/>
            <person name="Rosovitz M.J."/>
            <person name="Sullivan S.A."/>
            <person name="Daugherty S.C."/>
            <person name="Haft D.H."/>
            <person name="Selengut J."/>
            <person name="Gwinn M.L."/>
            <person name="Zhou L."/>
            <person name="Zafar N."/>
            <person name="Khouri H."/>
            <person name="Radune D."/>
            <person name="Dimitrov G."/>
            <person name="Watkins K."/>
            <person name="O'Connor K.J."/>
            <person name="Smith S."/>
            <person name="Utterback T.R."/>
            <person name="White O."/>
            <person name="Rubens C.E."/>
            <person name="Grandi G."/>
            <person name="Madoff L.C."/>
            <person name="Kasper D.L."/>
            <person name="Telford J.L."/>
            <person name="Wessels M.R."/>
            <person name="Rappuoli R."/>
            <person name="Fraser C.M."/>
        </authorList>
    </citation>
    <scope>NUCLEOTIDE SEQUENCE [LARGE SCALE GENOMIC DNA]</scope>
    <source>
        <strain>ATCC 27591 / A909 / CDC SS700</strain>
    </source>
</reference>
<protein>
    <recommendedName>
        <fullName evidence="1">Leucine--tRNA ligase</fullName>
        <ecNumber evidence="1">6.1.1.4</ecNumber>
    </recommendedName>
    <alternativeName>
        <fullName evidence="1">Leucyl-tRNA synthetase</fullName>
        <shortName evidence="1">LeuRS</shortName>
    </alternativeName>
</protein>
<comment type="catalytic activity">
    <reaction evidence="1">
        <text>tRNA(Leu) + L-leucine + ATP = L-leucyl-tRNA(Leu) + AMP + diphosphate</text>
        <dbReference type="Rhea" id="RHEA:11688"/>
        <dbReference type="Rhea" id="RHEA-COMP:9613"/>
        <dbReference type="Rhea" id="RHEA-COMP:9622"/>
        <dbReference type="ChEBI" id="CHEBI:30616"/>
        <dbReference type="ChEBI" id="CHEBI:33019"/>
        <dbReference type="ChEBI" id="CHEBI:57427"/>
        <dbReference type="ChEBI" id="CHEBI:78442"/>
        <dbReference type="ChEBI" id="CHEBI:78494"/>
        <dbReference type="ChEBI" id="CHEBI:456215"/>
        <dbReference type="EC" id="6.1.1.4"/>
    </reaction>
</comment>
<comment type="subcellular location">
    <subcellularLocation>
        <location evidence="1">Cytoplasm</location>
    </subcellularLocation>
</comment>
<comment type="similarity">
    <text evidence="1">Belongs to the class-I aminoacyl-tRNA synthetase family.</text>
</comment>
<sequence>MTFYNHKEIEPKWQAFWADNHTFKTGTDASKPKFYALDMFPYPSGAGLHVGHPEGYTATDILSRFKRAQGHNVLHPMGWDAFGLPAEQYAMDTGNDPAEFTAENIANFKRQINALGFSYDWDREVNTTDPNYYKWTQWIFTKLYEKGLAYEAEVPVNWVEELGTAIANEEVLPDGTSERGGYPVVRKPMRQWMLKITAYAERLLEDLEEVDWPESIKDMQRNWIGKSTGANVTFKVKDTDKDFTVFTTRPDTLFGATYAVLAPEHALVDAITTADQAEAVAEYKRQASLKSDLARTDLAKEKTGVWTGAYAINPVNGKEIPVWIADYVLASYGTGAIMAVPAHDERDWEFAKQFKLDIIPVLEGGNVEEAAFTEDGLHINSDFLDGLDKASAIAKMVEWLEAEGVGNEKVTYRLRDWLFSRQRYWGEPIPIIHWEDGTSTAVPESELPLVLPVTKDIRPSGTGESPLANLTDWLEVTREDGVKGRRETNTMPQWAGSSWYYLRYIDPHNTEKLADEELLKQWLPVDIYVGGAEHAVLHLLYARFWHKVLYDLGVVPTKEPFQKLFNQGMILGTSYRDSRGALVATDKVEKRDGSFFHVETGEELEQAPAKMSKSLKNVVNPDDVVEQYGADTLRVYEMFMGPLDASIAWSEEGLEGSRKFLDRVYRLITTKEITKENSGALDKVYNETVKAVTEQVDQMKFNTAIAQLMVFVNAANKEDKLFSDYAKGFVQLIAPFAPHLGEELWQVLTASGESISYVPWPSYDESKLVENEIEIVVQIKGKVKAKLVVAKDLSREELQDLALANEKVQSEIAGKDIIKVIAVPNKLVNIVVK</sequence>
<name>SYL_STRA1</name>
<organism>
    <name type="scientific">Streptococcus agalactiae serotype Ia (strain ATCC 27591 / A909 / CDC SS700)</name>
    <dbReference type="NCBI Taxonomy" id="205921"/>
    <lineage>
        <taxon>Bacteria</taxon>
        <taxon>Bacillati</taxon>
        <taxon>Bacillota</taxon>
        <taxon>Bacilli</taxon>
        <taxon>Lactobacillales</taxon>
        <taxon>Streptococcaceae</taxon>
        <taxon>Streptococcus</taxon>
    </lineage>
</organism>
<feature type="chain" id="PRO_1000009442" description="Leucine--tRNA ligase">
    <location>
        <begin position="1"/>
        <end position="833"/>
    </location>
</feature>
<feature type="short sequence motif" description="'HIGH' region">
    <location>
        <begin position="41"/>
        <end position="52"/>
    </location>
</feature>
<feature type="short sequence motif" description="'KMSKS' region">
    <location>
        <begin position="610"/>
        <end position="614"/>
    </location>
</feature>
<feature type="binding site" evidence="1">
    <location>
        <position position="613"/>
    </location>
    <ligand>
        <name>ATP</name>
        <dbReference type="ChEBI" id="CHEBI:30616"/>
    </ligand>
</feature>
<proteinExistence type="inferred from homology"/>
<accession>Q3JYR6</accession>
<dbReference type="EC" id="6.1.1.4" evidence="1"/>
<dbReference type="EMBL" id="CP000114">
    <property type="protein sequence ID" value="ABA45804.1"/>
    <property type="molecule type" value="Genomic_DNA"/>
</dbReference>
<dbReference type="RefSeq" id="WP_000145177.1">
    <property type="nucleotide sequence ID" value="NC_007432.1"/>
</dbReference>
<dbReference type="SMR" id="Q3JYR6"/>
<dbReference type="KEGG" id="sak:SAK_1995"/>
<dbReference type="HOGENOM" id="CLU_004427_0_0_9"/>
<dbReference type="GO" id="GO:0005829">
    <property type="term" value="C:cytosol"/>
    <property type="evidence" value="ECO:0007669"/>
    <property type="project" value="TreeGrafter"/>
</dbReference>
<dbReference type="GO" id="GO:0002161">
    <property type="term" value="F:aminoacyl-tRNA deacylase activity"/>
    <property type="evidence" value="ECO:0007669"/>
    <property type="project" value="InterPro"/>
</dbReference>
<dbReference type="GO" id="GO:0005524">
    <property type="term" value="F:ATP binding"/>
    <property type="evidence" value="ECO:0007669"/>
    <property type="project" value="UniProtKB-UniRule"/>
</dbReference>
<dbReference type="GO" id="GO:0004823">
    <property type="term" value="F:leucine-tRNA ligase activity"/>
    <property type="evidence" value="ECO:0007669"/>
    <property type="project" value="UniProtKB-UniRule"/>
</dbReference>
<dbReference type="GO" id="GO:0006429">
    <property type="term" value="P:leucyl-tRNA aminoacylation"/>
    <property type="evidence" value="ECO:0007669"/>
    <property type="project" value="UniProtKB-UniRule"/>
</dbReference>
<dbReference type="CDD" id="cd07958">
    <property type="entry name" value="Anticodon_Ia_Leu_BEm"/>
    <property type="match status" value="1"/>
</dbReference>
<dbReference type="CDD" id="cd00812">
    <property type="entry name" value="LeuRS_core"/>
    <property type="match status" value="1"/>
</dbReference>
<dbReference type="FunFam" id="1.10.730.10:FF:000012">
    <property type="entry name" value="Leucine--tRNA ligase"/>
    <property type="match status" value="1"/>
</dbReference>
<dbReference type="FunFam" id="3.40.50.620:FF:000056">
    <property type="entry name" value="Leucine--tRNA ligase"/>
    <property type="match status" value="1"/>
</dbReference>
<dbReference type="FunFam" id="3.40.50.620:FF:000077">
    <property type="entry name" value="Leucine--tRNA ligase"/>
    <property type="match status" value="1"/>
</dbReference>
<dbReference type="FunFam" id="1.10.730.10:FF:000011">
    <property type="entry name" value="Leucine--tRNA ligase chloroplastic/mitochondrial"/>
    <property type="match status" value="1"/>
</dbReference>
<dbReference type="Gene3D" id="3.40.50.620">
    <property type="entry name" value="HUPs"/>
    <property type="match status" value="2"/>
</dbReference>
<dbReference type="Gene3D" id="1.10.730.10">
    <property type="entry name" value="Isoleucyl-tRNA Synthetase, Domain 1"/>
    <property type="match status" value="1"/>
</dbReference>
<dbReference type="Gene3D" id="3.90.740.10">
    <property type="entry name" value="Valyl/Leucyl/Isoleucyl-tRNA synthetase, editing domain"/>
    <property type="match status" value="1"/>
</dbReference>
<dbReference type="HAMAP" id="MF_00049_B">
    <property type="entry name" value="Leu_tRNA_synth_B"/>
    <property type="match status" value="1"/>
</dbReference>
<dbReference type="InterPro" id="IPR001412">
    <property type="entry name" value="aa-tRNA-synth_I_CS"/>
</dbReference>
<dbReference type="InterPro" id="IPR002300">
    <property type="entry name" value="aa-tRNA-synth_Ia"/>
</dbReference>
<dbReference type="InterPro" id="IPR002302">
    <property type="entry name" value="Leu-tRNA-ligase"/>
</dbReference>
<dbReference type="InterPro" id="IPR025709">
    <property type="entry name" value="Leu_tRNA-synth_edit"/>
</dbReference>
<dbReference type="InterPro" id="IPR013155">
    <property type="entry name" value="M/V/L/I-tRNA-synth_anticd-bd"/>
</dbReference>
<dbReference type="InterPro" id="IPR015413">
    <property type="entry name" value="Methionyl/Leucyl_tRNA_Synth"/>
</dbReference>
<dbReference type="InterPro" id="IPR014729">
    <property type="entry name" value="Rossmann-like_a/b/a_fold"/>
</dbReference>
<dbReference type="InterPro" id="IPR009080">
    <property type="entry name" value="tRNAsynth_Ia_anticodon-bd"/>
</dbReference>
<dbReference type="InterPro" id="IPR009008">
    <property type="entry name" value="Val/Leu/Ile-tRNA-synth_edit"/>
</dbReference>
<dbReference type="NCBIfam" id="TIGR00396">
    <property type="entry name" value="leuS_bact"/>
    <property type="match status" value="1"/>
</dbReference>
<dbReference type="PANTHER" id="PTHR43740:SF2">
    <property type="entry name" value="LEUCINE--TRNA LIGASE, MITOCHONDRIAL"/>
    <property type="match status" value="1"/>
</dbReference>
<dbReference type="PANTHER" id="PTHR43740">
    <property type="entry name" value="LEUCYL-TRNA SYNTHETASE"/>
    <property type="match status" value="1"/>
</dbReference>
<dbReference type="Pfam" id="PF08264">
    <property type="entry name" value="Anticodon_1"/>
    <property type="match status" value="1"/>
</dbReference>
<dbReference type="Pfam" id="PF00133">
    <property type="entry name" value="tRNA-synt_1"/>
    <property type="match status" value="2"/>
</dbReference>
<dbReference type="Pfam" id="PF13603">
    <property type="entry name" value="tRNA-synt_1_2"/>
    <property type="match status" value="1"/>
</dbReference>
<dbReference type="Pfam" id="PF09334">
    <property type="entry name" value="tRNA-synt_1g"/>
    <property type="match status" value="1"/>
</dbReference>
<dbReference type="PRINTS" id="PR00985">
    <property type="entry name" value="TRNASYNTHLEU"/>
</dbReference>
<dbReference type="SUPFAM" id="SSF47323">
    <property type="entry name" value="Anticodon-binding domain of a subclass of class I aminoacyl-tRNA synthetases"/>
    <property type="match status" value="1"/>
</dbReference>
<dbReference type="SUPFAM" id="SSF52374">
    <property type="entry name" value="Nucleotidylyl transferase"/>
    <property type="match status" value="1"/>
</dbReference>
<dbReference type="SUPFAM" id="SSF50677">
    <property type="entry name" value="ValRS/IleRS/LeuRS editing domain"/>
    <property type="match status" value="1"/>
</dbReference>
<dbReference type="PROSITE" id="PS00178">
    <property type="entry name" value="AA_TRNA_LIGASE_I"/>
    <property type="match status" value="1"/>
</dbReference>
<evidence type="ECO:0000255" key="1">
    <source>
        <dbReference type="HAMAP-Rule" id="MF_00049"/>
    </source>
</evidence>
<gene>
    <name evidence="1" type="primary">leuS</name>
    <name type="ordered locus">SAK_1995</name>
</gene>
<keyword id="KW-0030">Aminoacyl-tRNA synthetase</keyword>
<keyword id="KW-0067">ATP-binding</keyword>
<keyword id="KW-0963">Cytoplasm</keyword>
<keyword id="KW-0436">Ligase</keyword>
<keyword id="KW-0547">Nucleotide-binding</keyword>
<keyword id="KW-0648">Protein biosynthesis</keyword>